<feature type="signal peptide" evidence="1">
    <location>
        <begin position="1"/>
        <end position="27"/>
    </location>
</feature>
<feature type="chain" id="PRO_0000307160" description="Brorin">
    <location>
        <begin position="28"/>
        <end position="324"/>
    </location>
</feature>
<feature type="domain" description="VWFC 1" evidence="2">
    <location>
        <begin position="152"/>
        <end position="211"/>
    </location>
</feature>
<feature type="domain" description="VWFC 2" evidence="2">
    <location>
        <begin position="215"/>
        <end position="273"/>
    </location>
</feature>
<feature type="region of interest" description="Disordered" evidence="3">
    <location>
        <begin position="37"/>
        <end position="126"/>
    </location>
</feature>
<feature type="short sequence motif" description="Mediates cell adhesion">
    <location>
        <begin position="114"/>
        <end position="116"/>
    </location>
</feature>
<feature type="compositionally biased region" description="Basic and acidic residues" evidence="3">
    <location>
        <begin position="44"/>
        <end position="56"/>
    </location>
</feature>
<feature type="compositionally biased region" description="Basic and acidic residues" evidence="3">
    <location>
        <begin position="64"/>
        <end position="78"/>
    </location>
</feature>
<feature type="compositionally biased region" description="Low complexity" evidence="3">
    <location>
        <begin position="92"/>
        <end position="107"/>
    </location>
</feature>
<keyword id="KW-0084">Basement membrane</keyword>
<keyword id="KW-0272">Extracellular matrix</keyword>
<keyword id="KW-1185">Reference proteome</keyword>
<keyword id="KW-0677">Repeat</keyword>
<keyword id="KW-0964">Secreted</keyword>
<keyword id="KW-0732">Signal</keyword>
<keyword id="KW-0770">Synapse</keyword>
<gene>
    <name type="primary">Vwc2</name>
</gene>
<evidence type="ECO:0000255" key="1"/>
<evidence type="ECO:0000255" key="2">
    <source>
        <dbReference type="PROSITE-ProRule" id="PRU00220"/>
    </source>
</evidence>
<evidence type="ECO:0000256" key="3">
    <source>
        <dbReference type="SAM" id="MobiDB-lite"/>
    </source>
</evidence>
<evidence type="ECO:0000269" key="4">
    <source>
    </source>
</evidence>
<evidence type="ECO:0000269" key="5">
    <source>
    </source>
</evidence>
<evidence type="ECO:0000269" key="6">
    <source>
    </source>
</evidence>
<evidence type="ECO:0000305" key="7"/>
<proteinExistence type="evidence at protein level"/>
<dbReference type="EMBL" id="AB292670">
    <property type="protein sequence ID" value="BAF51550.1"/>
    <property type="molecule type" value="mRNA"/>
</dbReference>
<dbReference type="EMBL" id="DQ421811">
    <property type="protein sequence ID" value="ABD83334.1"/>
    <property type="molecule type" value="mRNA"/>
</dbReference>
<dbReference type="EMBL" id="AK044771">
    <property type="protein sequence ID" value="BAC32080.1"/>
    <property type="molecule type" value="mRNA"/>
</dbReference>
<dbReference type="EMBL" id="AK141514">
    <property type="protein sequence ID" value="BAE24710.1"/>
    <property type="molecule type" value="mRNA"/>
</dbReference>
<dbReference type="EMBL" id="AL663084">
    <property type="protein sequence ID" value="CAI25053.2"/>
    <property type="status" value="ALT_INIT"/>
    <property type="molecule type" value="Genomic_DNA"/>
</dbReference>
<dbReference type="EMBL" id="AL663071">
    <property type="protein sequence ID" value="CAI25053.2"/>
    <property type="status" value="JOINED"/>
    <property type="molecule type" value="Genomic_DNA"/>
</dbReference>
<dbReference type="EMBL" id="AL663071">
    <property type="protein sequence ID" value="CAI35949.1"/>
    <property type="molecule type" value="Genomic_DNA"/>
</dbReference>
<dbReference type="EMBL" id="AL663084">
    <property type="protein sequence ID" value="CAI35949.1"/>
    <property type="status" value="JOINED"/>
    <property type="molecule type" value="Genomic_DNA"/>
</dbReference>
<dbReference type="EMBL" id="CH466574">
    <property type="protein sequence ID" value="EDL40630.1"/>
    <property type="molecule type" value="Genomic_DNA"/>
</dbReference>
<dbReference type="EMBL" id="CH466574">
    <property type="protein sequence ID" value="EDL40631.1"/>
    <property type="molecule type" value="Genomic_DNA"/>
</dbReference>
<dbReference type="EMBL" id="BC120564">
    <property type="protein sequence ID" value="AAI20565.1"/>
    <property type="molecule type" value="mRNA"/>
</dbReference>
<dbReference type="EMBL" id="BC137825">
    <property type="protein sequence ID" value="AAI37826.1"/>
    <property type="molecule type" value="mRNA"/>
</dbReference>
<dbReference type="CCDS" id="CCDS36111.1"/>
<dbReference type="RefSeq" id="NP_796007.1">
    <property type="nucleotide sequence ID" value="NM_177033.3"/>
</dbReference>
<dbReference type="RefSeq" id="XP_036012653.1">
    <property type="nucleotide sequence ID" value="XM_036156760.1"/>
</dbReference>
<dbReference type="SMR" id="Q8C8N3"/>
<dbReference type="FunCoup" id="Q8C8N3">
    <property type="interactions" value="146"/>
</dbReference>
<dbReference type="STRING" id="10090.ENSMUSP00000105303"/>
<dbReference type="PaxDb" id="10090-ENSMUSP00000105303"/>
<dbReference type="ProteomicsDB" id="297836"/>
<dbReference type="Antibodypedia" id="62692">
    <property type="antibodies" value="59 antibodies from 13 providers"/>
</dbReference>
<dbReference type="DNASU" id="319922"/>
<dbReference type="Ensembl" id="ENSMUST00000056344.5">
    <property type="protein sequence ID" value="ENSMUSP00000049692.5"/>
    <property type="gene ID" value="ENSMUSG00000050830.18"/>
</dbReference>
<dbReference type="Ensembl" id="ENSMUST00000109681.8">
    <property type="protein sequence ID" value="ENSMUSP00000105303.2"/>
    <property type="gene ID" value="ENSMUSG00000050830.18"/>
</dbReference>
<dbReference type="Ensembl" id="ENSMUST00000129670.8">
    <property type="protein sequence ID" value="ENSMUSP00000128761.2"/>
    <property type="gene ID" value="ENSMUSG00000050830.18"/>
</dbReference>
<dbReference type="GeneID" id="319922"/>
<dbReference type="KEGG" id="mmu:319922"/>
<dbReference type="UCSC" id="uc007iac.1">
    <property type="organism name" value="mouse"/>
</dbReference>
<dbReference type="AGR" id="MGI:2442987"/>
<dbReference type="CTD" id="375567"/>
<dbReference type="MGI" id="MGI:2442987">
    <property type="gene designation" value="Vwc2"/>
</dbReference>
<dbReference type="VEuPathDB" id="HostDB:ENSMUSG00000050830"/>
<dbReference type="eggNOG" id="ENOG502QW4Q">
    <property type="taxonomic scope" value="Eukaryota"/>
</dbReference>
<dbReference type="GeneTree" id="ENSGT00720000108792"/>
<dbReference type="HOGENOM" id="CLU_073865_0_0_1"/>
<dbReference type="InParanoid" id="Q8C8N3"/>
<dbReference type="OMA" id="EKCHCEA"/>
<dbReference type="OrthoDB" id="8574072at2759"/>
<dbReference type="PhylomeDB" id="Q8C8N3"/>
<dbReference type="TreeFam" id="TF329913"/>
<dbReference type="BioGRID-ORCS" id="319922">
    <property type="hits" value="2 hits in 77 CRISPR screens"/>
</dbReference>
<dbReference type="PRO" id="PR:Q8C8N3"/>
<dbReference type="Proteomes" id="UP000000589">
    <property type="component" value="Chromosome 11"/>
</dbReference>
<dbReference type="RNAct" id="Q8C8N3">
    <property type="molecule type" value="protein"/>
</dbReference>
<dbReference type="Bgee" id="ENSMUSG00000050830">
    <property type="expression patterns" value="Expressed in medial geniculate body and 149 other cell types or tissues"/>
</dbReference>
<dbReference type="GO" id="GO:0032281">
    <property type="term" value="C:AMPA glutamate receptor complex"/>
    <property type="evidence" value="ECO:0000314"/>
    <property type="project" value="MGI"/>
</dbReference>
<dbReference type="GO" id="GO:0005604">
    <property type="term" value="C:basement membrane"/>
    <property type="evidence" value="ECO:0000314"/>
    <property type="project" value="MGI"/>
</dbReference>
<dbReference type="GO" id="GO:0031012">
    <property type="term" value="C:extracellular matrix"/>
    <property type="evidence" value="ECO:0000314"/>
    <property type="project" value="MGI"/>
</dbReference>
<dbReference type="GO" id="GO:0005615">
    <property type="term" value="C:extracellular space"/>
    <property type="evidence" value="ECO:0000314"/>
    <property type="project" value="HGNC-UCL"/>
</dbReference>
<dbReference type="GO" id="GO:0098890">
    <property type="term" value="C:extrinsic component of postsynaptic membrane"/>
    <property type="evidence" value="ECO:0000314"/>
    <property type="project" value="SynGO"/>
</dbReference>
<dbReference type="GO" id="GO:0098978">
    <property type="term" value="C:glutamatergic synapse"/>
    <property type="evidence" value="ECO:0000314"/>
    <property type="project" value="SynGO"/>
</dbReference>
<dbReference type="GO" id="GO:0005614">
    <property type="term" value="C:interstitial matrix"/>
    <property type="evidence" value="ECO:0000314"/>
    <property type="project" value="MGI"/>
</dbReference>
<dbReference type="GO" id="GO:0030514">
    <property type="term" value="P:negative regulation of BMP signaling pathway"/>
    <property type="evidence" value="ECO:0000314"/>
    <property type="project" value="HGNC-UCL"/>
</dbReference>
<dbReference type="GO" id="GO:0099645">
    <property type="term" value="P:neurotransmitter receptor localization to postsynaptic specialization membrane"/>
    <property type="evidence" value="ECO:0000314"/>
    <property type="project" value="SynGO"/>
</dbReference>
<dbReference type="GO" id="GO:0010811">
    <property type="term" value="P:positive regulation of cell-substrate adhesion"/>
    <property type="evidence" value="ECO:0000314"/>
    <property type="project" value="MGI"/>
</dbReference>
<dbReference type="GO" id="GO:0045666">
    <property type="term" value="P:positive regulation of neuron differentiation"/>
    <property type="evidence" value="ECO:0000314"/>
    <property type="project" value="HGNC-UCL"/>
</dbReference>
<dbReference type="Gene3D" id="6.20.200.20">
    <property type="match status" value="1"/>
</dbReference>
<dbReference type="InterPro" id="IPR042979">
    <property type="entry name" value="VWC2/VWC2L"/>
</dbReference>
<dbReference type="InterPro" id="IPR001007">
    <property type="entry name" value="VWF_dom"/>
</dbReference>
<dbReference type="PANTHER" id="PTHR46252:SF4">
    <property type="entry name" value="BRORIN"/>
    <property type="match status" value="1"/>
</dbReference>
<dbReference type="PANTHER" id="PTHR46252">
    <property type="entry name" value="BRORIN FAMILY MEMBER"/>
    <property type="match status" value="1"/>
</dbReference>
<dbReference type="Pfam" id="PF23333">
    <property type="entry name" value="VWC2L_1st"/>
    <property type="match status" value="1"/>
</dbReference>
<dbReference type="Pfam" id="PF23334">
    <property type="entry name" value="VWC2L_2nd"/>
    <property type="match status" value="1"/>
</dbReference>
<dbReference type="Pfam" id="PF23331">
    <property type="entry name" value="VWC2L_C"/>
    <property type="match status" value="1"/>
</dbReference>
<dbReference type="SMART" id="SM00214">
    <property type="entry name" value="VWC"/>
    <property type="match status" value="2"/>
</dbReference>
<dbReference type="SUPFAM" id="SSF57603">
    <property type="entry name" value="FnI-like domain"/>
    <property type="match status" value="1"/>
</dbReference>
<dbReference type="PROSITE" id="PS01208">
    <property type="entry name" value="VWFC_1"/>
    <property type="match status" value="1"/>
</dbReference>
<dbReference type="PROSITE" id="PS50184">
    <property type="entry name" value="VWFC_2"/>
    <property type="match status" value="1"/>
</dbReference>
<comment type="function">
    <text evidence="4 5">BMP antagonist which may play a role in neural development. Promotes cell adhesion.</text>
</comment>
<comment type="subunit">
    <text evidence="6">Peripherally associated with AMPAR complex. AMPAR complex consists of an inner core made of 4 pore-forming GluA/GRIA proteins (GRIA1, GRIA2, GRIA3 and GRIA4) and 4 major auxiliary subunits arranged in a twofold symmetry. One of the two pairs of distinct binding sites is occupied either by CNIH2, CNIH3 or CACNG2, CACNG3. The other harbors CACNG2, CACNG3, CACNG4, CACNG8 or GSG1L. This inner core of AMPAR complex is complemented by outer core constituents binding directly to the GluA/GRIA proteins at sites distinct from the interaction sites of the inner core constituents. Outer core constituents include at least PRRT1, PRRT2, CKAMP44/SHISA9, FRRS1L and NRN1. The proteins of the inner and outer core serve as a platform for other, more peripherally associated AMPAR constituents, including VWC2. Alone or in combination, these auxiliary subunits control the gating and pharmacology of the AMPAR complex and profoundly impact their biogenesis and protein processing.</text>
</comment>
<comment type="subcellular location">
    <subcellularLocation>
        <location>Secreted</location>
        <location>Extracellular space</location>
        <location>Extracellular matrix</location>
        <location>Basement membrane</location>
    </subcellularLocation>
    <subcellularLocation>
        <location evidence="7">Synapse</location>
    </subcellularLocation>
</comment>
<comment type="tissue specificity">
    <text evidence="4 5 6">Predominantly expressed in the brain (at protein level). It is expressed in the neurons but not the glial cells.</text>
</comment>
<comment type="developmental stage">
    <text evidence="4 5">At 12.5 dpc, predominantly expressed in the developing diencephalon. At 16.5 dpc and 18.5 dpc, expressed in the brain, spinal cord, developing neural tubes and tongue but not in the cerebral cortex. At 16.5 dpc, present in developing oral and tooth germ epithelia (at protein level).</text>
</comment>
<comment type="sequence caution" evidence="7">
    <conflict type="erroneous initiation">
        <sequence resource="EMBL-CDS" id="CAI25053"/>
    </conflict>
    <text>Truncated N-terminus.</text>
</comment>
<sequence>MPSSSAMAVGALSSSLLVTCCLMVALCSPSIPLEKLAQAPEQPGQEKREHASRDSPGRVSELGRASRDEGSSARDWKSKGSRALSGREAWSKQKQAWAAQGGSAKAADWQVRPRGDTPQGEPPAAAQEAISLELVPTPELPEEYAYPDYRGKGCVDESGFVYAIGEKFAPGPSACPCLCTEEGPLCAQPECPRLHPRCIHVDNSQCCPQCKEKKNYCEFRGKTYQTLEEFVVSPCERCRCEANGEVLCTVSACPQTECVDPVYEPDQCCPICKNGPNCFAETAVIPAGREVKTDECTICHCTYEEGTWRIERQAMCTRHECRQM</sequence>
<organism>
    <name type="scientific">Mus musculus</name>
    <name type="common">Mouse</name>
    <dbReference type="NCBI Taxonomy" id="10090"/>
    <lineage>
        <taxon>Eukaryota</taxon>
        <taxon>Metazoa</taxon>
        <taxon>Chordata</taxon>
        <taxon>Craniata</taxon>
        <taxon>Vertebrata</taxon>
        <taxon>Euteleostomi</taxon>
        <taxon>Mammalia</taxon>
        <taxon>Eutheria</taxon>
        <taxon>Euarchontoglires</taxon>
        <taxon>Glires</taxon>
        <taxon>Rodentia</taxon>
        <taxon>Myomorpha</taxon>
        <taxon>Muroidea</taxon>
        <taxon>Muridae</taxon>
        <taxon>Murinae</taxon>
        <taxon>Mus</taxon>
        <taxon>Mus</taxon>
    </lineage>
</organism>
<protein>
    <recommendedName>
        <fullName>Brorin</fullName>
    </recommendedName>
    <alternativeName>
        <fullName>Brain-specific chordin-like protein</fullName>
    </alternativeName>
    <alternativeName>
        <fullName>CR (chordin-like cysteine-rich) domain-containing adhesive protein</fullName>
        <shortName>Cradin</shortName>
    </alternativeName>
    <alternativeName>
        <fullName>von Willebrand factor C domain-containing protein 2</fullName>
    </alternativeName>
</protein>
<reference key="1">
    <citation type="journal article" date="2007" name="J. Biol. Chem.">
        <title>Brorin, a novel secreted bone morphogenetic protein antagonist, promotes neurogenesis in mouse neural precursor cells.</title>
        <authorList>
            <person name="Koike N."/>
            <person name="Kassai Y."/>
            <person name="Kouta Y."/>
            <person name="Miwa H."/>
            <person name="Konishi M."/>
            <person name="Itoh N."/>
        </authorList>
    </citation>
    <scope>NUCLEOTIDE SEQUENCE [MRNA]</scope>
    <scope>FUNCTION</scope>
    <scope>SUBCELLULAR LOCATION</scope>
    <scope>TISSUE SPECIFICITY</scope>
    <scope>DEVELOPMENTAL STAGE</scope>
</reference>
<reference key="2">
    <citation type="submission" date="2006-02" db="EMBL/GenBank/DDBJ databases">
        <title>A novel member of cysteine-rich protein family highly expressed in brain.</title>
        <authorList>
            <person name="Mochida Y."/>
            <person name="Yamauchi M."/>
        </authorList>
    </citation>
    <scope>NUCLEOTIDE SEQUENCE [MRNA]</scope>
    <source>
        <tissue>Brain</tissue>
    </source>
</reference>
<reference key="3">
    <citation type="journal article" date="2005" name="Science">
        <title>The transcriptional landscape of the mammalian genome.</title>
        <authorList>
            <person name="Carninci P."/>
            <person name="Kasukawa T."/>
            <person name="Katayama S."/>
            <person name="Gough J."/>
            <person name="Frith M.C."/>
            <person name="Maeda N."/>
            <person name="Oyama R."/>
            <person name="Ravasi T."/>
            <person name="Lenhard B."/>
            <person name="Wells C."/>
            <person name="Kodzius R."/>
            <person name="Shimokawa K."/>
            <person name="Bajic V.B."/>
            <person name="Brenner S.E."/>
            <person name="Batalov S."/>
            <person name="Forrest A.R."/>
            <person name="Zavolan M."/>
            <person name="Davis M.J."/>
            <person name="Wilming L.G."/>
            <person name="Aidinis V."/>
            <person name="Allen J.E."/>
            <person name="Ambesi-Impiombato A."/>
            <person name="Apweiler R."/>
            <person name="Aturaliya R.N."/>
            <person name="Bailey T.L."/>
            <person name="Bansal M."/>
            <person name="Baxter L."/>
            <person name="Beisel K.W."/>
            <person name="Bersano T."/>
            <person name="Bono H."/>
            <person name="Chalk A.M."/>
            <person name="Chiu K.P."/>
            <person name="Choudhary V."/>
            <person name="Christoffels A."/>
            <person name="Clutterbuck D.R."/>
            <person name="Crowe M.L."/>
            <person name="Dalla E."/>
            <person name="Dalrymple B.P."/>
            <person name="de Bono B."/>
            <person name="Della Gatta G."/>
            <person name="di Bernardo D."/>
            <person name="Down T."/>
            <person name="Engstrom P."/>
            <person name="Fagiolini M."/>
            <person name="Faulkner G."/>
            <person name="Fletcher C.F."/>
            <person name="Fukushima T."/>
            <person name="Furuno M."/>
            <person name="Futaki S."/>
            <person name="Gariboldi M."/>
            <person name="Georgii-Hemming P."/>
            <person name="Gingeras T.R."/>
            <person name="Gojobori T."/>
            <person name="Green R.E."/>
            <person name="Gustincich S."/>
            <person name="Harbers M."/>
            <person name="Hayashi Y."/>
            <person name="Hensch T.K."/>
            <person name="Hirokawa N."/>
            <person name="Hill D."/>
            <person name="Huminiecki L."/>
            <person name="Iacono M."/>
            <person name="Ikeo K."/>
            <person name="Iwama A."/>
            <person name="Ishikawa T."/>
            <person name="Jakt M."/>
            <person name="Kanapin A."/>
            <person name="Katoh M."/>
            <person name="Kawasawa Y."/>
            <person name="Kelso J."/>
            <person name="Kitamura H."/>
            <person name="Kitano H."/>
            <person name="Kollias G."/>
            <person name="Krishnan S.P."/>
            <person name="Kruger A."/>
            <person name="Kummerfeld S.K."/>
            <person name="Kurochkin I.V."/>
            <person name="Lareau L.F."/>
            <person name="Lazarevic D."/>
            <person name="Lipovich L."/>
            <person name="Liu J."/>
            <person name="Liuni S."/>
            <person name="McWilliam S."/>
            <person name="Madan Babu M."/>
            <person name="Madera M."/>
            <person name="Marchionni L."/>
            <person name="Matsuda H."/>
            <person name="Matsuzawa S."/>
            <person name="Miki H."/>
            <person name="Mignone F."/>
            <person name="Miyake S."/>
            <person name="Morris K."/>
            <person name="Mottagui-Tabar S."/>
            <person name="Mulder N."/>
            <person name="Nakano N."/>
            <person name="Nakauchi H."/>
            <person name="Ng P."/>
            <person name="Nilsson R."/>
            <person name="Nishiguchi S."/>
            <person name="Nishikawa S."/>
            <person name="Nori F."/>
            <person name="Ohara O."/>
            <person name="Okazaki Y."/>
            <person name="Orlando V."/>
            <person name="Pang K.C."/>
            <person name="Pavan W.J."/>
            <person name="Pavesi G."/>
            <person name="Pesole G."/>
            <person name="Petrovsky N."/>
            <person name="Piazza S."/>
            <person name="Reed J."/>
            <person name="Reid J.F."/>
            <person name="Ring B.Z."/>
            <person name="Ringwald M."/>
            <person name="Rost B."/>
            <person name="Ruan Y."/>
            <person name="Salzberg S.L."/>
            <person name="Sandelin A."/>
            <person name="Schneider C."/>
            <person name="Schoenbach C."/>
            <person name="Sekiguchi K."/>
            <person name="Semple C.A."/>
            <person name="Seno S."/>
            <person name="Sessa L."/>
            <person name="Sheng Y."/>
            <person name="Shibata Y."/>
            <person name="Shimada H."/>
            <person name="Shimada K."/>
            <person name="Silva D."/>
            <person name="Sinclair B."/>
            <person name="Sperling S."/>
            <person name="Stupka E."/>
            <person name="Sugiura K."/>
            <person name="Sultana R."/>
            <person name="Takenaka Y."/>
            <person name="Taki K."/>
            <person name="Tammoja K."/>
            <person name="Tan S.L."/>
            <person name="Tang S."/>
            <person name="Taylor M.S."/>
            <person name="Tegner J."/>
            <person name="Teichmann S.A."/>
            <person name="Ueda H.R."/>
            <person name="van Nimwegen E."/>
            <person name="Verardo R."/>
            <person name="Wei C.L."/>
            <person name="Yagi K."/>
            <person name="Yamanishi H."/>
            <person name="Zabarovsky E."/>
            <person name="Zhu S."/>
            <person name="Zimmer A."/>
            <person name="Hide W."/>
            <person name="Bult C."/>
            <person name="Grimmond S.M."/>
            <person name="Teasdale R.D."/>
            <person name="Liu E.T."/>
            <person name="Brusic V."/>
            <person name="Quackenbush J."/>
            <person name="Wahlestedt C."/>
            <person name="Mattick J.S."/>
            <person name="Hume D.A."/>
            <person name="Kai C."/>
            <person name="Sasaki D."/>
            <person name="Tomaru Y."/>
            <person name="Fukuda S."/>
            <person name="Kanamori-Katayama M."/>
            <person name="Suzuki M."/>
            <person name="Aoki J."/>
            <person name="Arakawa T."/>
            <person name="Iida J."/>
            <person name="Imamura K."/>
            <person name="Itoh M."/>
            <person name="Kato T."/>
            <person name="Kawaji H."/>
            <person name="Kawagashira N."/>
            <person name="Kawashima T."/>
            <person name="Kojima M."/>
            <person name="Kondo S."/>
            <person name="Konno H."/>
            <person name="Nakano K."/>
            <person name="Ninomiya N."/>
            <person name="Nishio T."/>
            <person name="Okada M."/>
            <person name="Plessy C."/>
            <person name="Shibata K."/>
            <person name="Shiraki T."/>
            <person name="Suzuki S."/>
            <person name="Tagami M."/>
            <person name="Waki K."/>
            <person name="Watahiki A."/>
            <person name="Okamura-Oho Y."/>
            <person name="Suzuki H."/>
            <person name="Kawai J."/>
            <person name="Hayashizaki Y."/>
        </authorList>
    </citation>
    <scope>NUCLEOTIDE SEQUENCE [LARGE SCALE MRNA]</scope>
    <source>
        <strain>C57BL/6J</strain>
        <tissue>Retina</tissue>
        <tissue>Spinal cord</tissue>
    </source>
</reference>
<reference key="4">
    <citation type="journal article" date="2009" name="PLoS Biol.">
        <title>Lineage-specific biology revealed by a finished genome assembly of the mouse.</title>
        <authorList>
            <person name="Church D.M."/>
            <person name="Goodstadt L."/>
            <person name="Hillier L.W."/>
            <person name="Zody M.C."/>
            <person name="Goldstein S."/>
            <person name="She X."/>
            <person name="Bult C.J."/>
            <person name="Agarwala R."/>
            <person name="Cherry J.L."/>
            <person name="DiCuccio M."/>
            <person name="Hlavina W."/>
            <person name="Kapustin Y."/>
            <person name="Meric P."/>
            <person name="Maglott D."/>
            <person name="Birtle Z."/>
            <person name="Marques A.C."/>
            <person name="Graves T."/>
            <person name="Zhou S."/>
            <person name="Teague B."/>
            <person name="Potamousis K."/>
            <person name="Churas C."/>
            <person name="Place M."/>
            <person name="Herschleb J."/>
            <person name="Runnheim R."/>
            <person name="Forrest D."/>
            <person name="Amos-Landgraf J."/>
            <person name="Schwartz D.C."/>
            <person name="Cheng Z."/>
            <person name="Lindblad-Toh K."/>
            <person name="Eichler E.E."/>
            <person name="Ponting C.P."/>
        </authorList>
    </citation>
    <scope>NUCLEOTIDE SEQUENCE [LARGE SCALE GENOMIC DNA]</scope>
    <source>
        <strain>C57BL/6J</strain>
    </source>
</reference>
<reference key="5">
    <citation type="submission" date="2005-07" db="EMBL/GenBank/DDBJ databases">
        <authorList>
            <person name="Mural R.J."/>
            <person name="Adams M.D."/>
            <person name="Myers E.W."/>
            <person name="Smith H.O."/>
            <person name="Venter J.C."/>
        </authorList>
    </citation>
    <scope>NUCLEOTIDE SEQUENCE [LARGE SCALE GENOMIC DNA]</scope>
</reference>
<reference key="6">
    <citation type="journal article" date="2004" name="Genome Res.">
        <title>The status, quality, and expansion of the NIH full-length cDNA project: the Mammalian Gene Collection (MGC).</title>
        <authorList>
            <consortium name="The MGC Project Team"/>
        </authorList>
    </citation>
    <scope>NUCLEOTIDE SEQUENCE [LARGE SCALE MRNA]</scope>
</reference>
<reference key="7">
    <citation type="journal article" date="2008" name="Proc. Natl. Acad. Sci. U.S.A.">
        <title>Transcriptome-based systematic identification of extracellular matrix proteins.</title>
        <authorList>
            <person name="Manabe R."/>
            <person name="Tsutsui K."/>
            <person name="Yamada T."/>
            <person name="Kimura M."/>
            <person name="Nakano I."/>
            <person name="Shimono C."/>
            <person name="Sanzen N."/>
            <person name="Furutani Y."/>
            <person name="Fukuda T."/>
            <person name="Oguri Y."/>
            <person name="Shimamoto K."/>
            <person name="Kiyozumi D."/>
            <person name="Sato Y."/>
            <person name="Sado Y."/>
            <person name="Senoo H."/>
            <person name="Yamashina S."/>
            <person name="Fukuda S."/>
            <person name="Kawai J."/>
            <person name="Sugiura N."/>
            <person name="Kimata K."/>
            <person name="Hayashizaki Y."/>
            <person name="Sekiguchi K."/>
        </authorList>
    </citation>
    <scope>FUNCTION</scope>
    <scope>TISSUE SPECIFICITY</scope>
    <scope>SUBCELLULAR LOCATION</scope>
    <scope>DEVELOPMENTAL STAGE</scope>
</reference>
<reference key="8">
    <citation type="journal article" date="2012" name="Neuron">
        <title>High-resolution proteomics unravel architecture and molecular diversity of native AMPA receptor complexes.</title>
        <authorList>
            <person name="Schwenk J."/>
            <person name="Harmel N."/>
            <person name="Brechet A."/>
            <person name="Zolles G."/>
            <person name="Berkefeld H."/>
            <person name="Muller C.S."/>
            <person name="Bildl W."/>
            <person name="Baehrens D."/>
            <person name="Huber B."/>
            <person name="Kulik A."/>
            <person name="Klocker N."/>
            <person name="Schulte U."/>
            <person name="Fakler B."/>
        </authorList>
    </citation>
    <scope>IDENTIFICATION IN AMPAR COMPLEX</scope>
    <scope>SUBCELLULAR LOCATION</scope>
    <scope>TISSUE SPECIFICITY</scope>
</reference>
<name>VWC2_MOUSE</name>
<accession>Q8C8N3</accession>
<accession>B2RQ98</accession>
<accession>Q5SSH5</accession>